<comment type="function">
    <text evidence="2 7">Involved in the biosynthesis of the arabinogalactan (AG) region of the mycolylarabinogalactan-peptidoglycan (mAGP) complex, an essential component of the mycobacterial cell wall. Catalyzes the addition of the first key arabinofuranosyl (Araf) residue from the sugar donor decaprenyl-phospho-arabinose (DPA) on the C-5 of a 6-linked galactofuranosyl (Galf) of the galactan domain, thus 'priming' the galactan for further elaboration by other arabinofuranosyltransferases. It is not able to add an Araf residue to a terminal Galf.</text>
</comment>
<comment type="catalytic activity">
    <reaction evidence="2 7">
        <text>Adds an alpha-D-arabinofuranosyl group from trans,octacis-decaprenylphospho-beta-D-arabinofuranose at the 5-O-position of the eighth, tenth and twelfth galactofuranose unit of the galactofuranan chain of [beta-D-galactofuranosyl-(1-&gt;5)-beta-D-galactofuranosyl-(1-&gt;6)]14-beta-D-galactofuranosyl-(1-&gt;5)-beta-D-galactofuranosyl-(1-&gt;4)-alpha-L-rhamnopyranosyl-(1-&gt;3)-N-acetyl-alpha-D-glucosaminyl-diphospho-trans,octacis-decaprenol.</text>
        <dbReference type="EC" id="2.4.2.46"/>
    </reaction>
</comment>
<comment type="activity regulation">
    <text evidence="2">Not inhibited by the anti-tuberculosis drug ethambutol (EMB).</text>
</comment>
<comment type="pathway">
    <text evidence="6">Cell wall biogenesis; cell wall polysaccharide biosynthesis.</text>
</comment>
<comment type="subunit">
    <text evidence="3">Interacts with Rv3789. Is thus probably part of an AG biosynthetic complex.</text>
</comment>
<comment type="subcellular location">
    <subcellularLocation>
        <location evidence="2">Cell membrane</location>
        <topology evidence="2">Multi-pass membrane protein</topology>
    </subcellularLocation>
</comment>
<comment type="similarity">
    <text evidence="5">Belongs to the glycosyltransferase 85 family.</text>
</comment>
<protein>
    <recommendedName>
        <fullName evidence="5">Galactan 5-O-arabinofuranosyltransferase</fullName>
        <ecNumber evidence="2 7">2.4.2.46</ecNumber>
    </recommendedName>
    <alternativeName>
        <fullName evidence="4">Arabinofuranosyltransferase AftA</fullName>
    </alternativeName>
</protein>
<gene>
    <name evidence="4" type="primary">aftA</name>
    <name type="ordered locus">Rv3792</name>
</gene>
<keyword id="KW-0002">3D-structure</keyword>
<keyword id="KW-1003">Cell membrane</keyword>
<keyword id="KW-0961">Cell wall biogenesis/degradation</keyword>
<keyword id="KW-0328">Glycosyltransferase</keyword>
<keyword id="KW-0472">Membrane</keyword>
<keyword id="KW-1185">Reference proteome</keyword>
<keyword id="KW-0808">Transferase</keyword>
<keyword id="KW-0812">Transmembrane</keyword>
<keyword id="KW-1133">Transmembrane helix</keyword>
<name>AFTA_MYCTU</name>
<dbReference type="EC" id="2.4.2.46" evidence="2 7"/>
<dbReference type="EMBL" id="AL123456">
    <property type="protein sequence ID" value="CCP46621.1"/>
    <property type="molecule type" value="Genomic_DNA"/>
</dbReference>
<dbReference type="PIR" id="D70697">
    <property type="entry name" value="D70697"/>
</dbReference>
<dbReference type="RefSeq" id="NP_218309.1">
    <property type="nucleotide sequence ID" value="NC_000962.3"/>
</dbReference>
<dbReference type="RefSeq" id="WP_003899694.1">
    <property type="nucleotide sequence ID" value="NZ_NVQJ01000009.1"/>
</dbReference>
<dbReference type="PDB" id="8IF8">
    <property type="method" value="EM"/>
    <property type="resolution" value="3.10 A"/>
    <property type="chains" value="B/C=1-643"/>
</dbReference>
<dbReference type="PDBsum" id="8IF8"/>
<dbReference type="EMDB" id="EMD-35410"/>
<dbReference type="SMR" id="P9WN03"/>
<dbReference type="FunCoup" id="P9WN03">
    <property type="interactions" value="13"/>
</dbReference>
<dbReference type="STRING" id="83332.Rv3792"/>
<dbReference type="PaxDb" id="83332-Rv3792"/>
<dbReference type="GeneID" id="886127"/>
<dbReference type="KEGG" id="mtu:Rv3792"/>
<dbReference type="KEGG" id="mtv:RVBD_3792"/>
<dbReference type="PATRIC" id="fig|83332.111.peg.4217"/>
<dbReference type="TubercuList" id="Rv3792"/>
<dbReference type="eggNOG" id="ENOG502ZB59">
    <property type="taxonomic scope" value="Bacteria"/>
</dbReference>
<dbReference type="InParanoid" id="P9WN03"/>
<dbReference type="OrthoDB" id="4775300at2"/>
<dbReference type="BioCyc" id="MetaCyc:G185E-8088-MONOMER"/>
<dbReference type="BRENDA" id="2.4.2.46">
    <property type="organism ID" value="3445"/>
</dbReference>
<dbReference type="UniPathway" id="UPA00963"/>
<dbReference type="Proteomes" id="UP000001584">
    <property type="component" value="Chromosome"/>
</dbReference>
<dbReference type="GO" id="GO:0009274">
    <property type="term" value="C:peptidoglycan-based cell wall"/>
    <property type="evidence" value="ECO:0007005"/>
    <property type="project" value="MTBBASE"/>
</dbReference>
<dbReference type="GO" id="GO:0005886">
    <property type="term" value="C:plasma membrane"/>
    <property type="evidence" value="ECO:0007005"/>
    <property type="project" value="MTBBASE"/>
</dbReference>
<dbReference type="GO" id="GO:0016757">
    <property type="term" value="F:glycosyltransferase activity"/>
    <property type="evidence" value="ECO:0000314"/>
    <property type="project" value="MTBBASE"/>
</dbReference>
<dbReference type="GO" id="GO:0035250">
    <property type="term" value="F:UDP-galactosyltransferase activity"/>
    <property type="evidence" value="ECO:0000314"/>
    <property type="project" value="MTBBASE"/>
</dbReference>
<dbReference type="GO" id="GO:0045227">
    <property type="term" value="P:capsule polysaccharide biosynthetic process"/>
    <property type="evidence" value="ECO:0007669"/>
    <property type="project" value="UniProtKB-UniPathway"/>
</dbReference>
<dbReference type="GO" id="GO:0044038">
    <property type="term" value="P:cell wall macromolecule biosynthetic process"/>
    <property type="evidence" value="ECO:0000314"/>
    <property type="project" value="UniProtKB"/>
</dbReference>
<dbReference type="GO" id="GO:0071555">
    <property type="term" value="P:cell wall organization"/>
    <property type="evidence" value="ECO:0007669"/>
    <property type="project" value="UniProtKB-KW"/>
</dbReference>
<dbReference type="GO" id="GO:0071769">
    <property type="term" value="P:mycolate cell wall layer assembly"/>
    <property type="evidence" value="ECO:0000315"/>
    <property type="project" value="MTBBASE"/>
</dbReference>
<dbReference type="InterPro" id="IPR020959">
    <property type="entry name" value="ArabinofuranosylTrfase_AftA_C"/>
</dbReference>
<dbReference type="InterPro" id="IPR020963">
    <property type="entry name" value="ArabinofuranosylTrfase_AftA_N"/>
</dbReference>
<dbReference type="Pfam" id="PF12249">
    <property type="entry name" value="AftA_C"/>
    <property type="match status" value="1"/>
</dbReference>
<dbReference type="Pfam" id="PF12250">
    <property type="entry name" value="AftA_N"/>
    <property type="match status" value="1"/>
</dbReference>
<sequence length="643" mass="69515">MPSRRKSPQFGHEMGAFTSARAREVLVALGQLAAAVVVAVGVAVVSLLAIARVEWPAFPSSNQLHALTTVGQVGCLAGLVGIGWLWRHGRFRRLARLGGLVLVSAFTVVTLGMPLGATKLYLFGISVDQQFRTEYLTRLTDTAALRDMTYIGLPPFYPPGWFWIGGRAAALTGTPAWEMFKPWAITSMAIAVAVALVLWWRMIRFEYALLVTVATAAVMLAYSSPEPYAAMITVLLPPMLVLTWSGLGARDRQGWAAVVGAGVFLGFAATWYTLLVAYGAFTVVLMALLLAGSRLQSGIKAAVDPLCRLAVVGAIAAAIGSTTWLPYLLRAARDPVSDTGSAQHYLPADGAALTFPMLQFSLLGAICLLGTLWLVMRARSSAPAGALAIGVLAVYLWSLLSMLATLARTTLLSFRLQPTLSVLLVAAGAFGFVEAVQALGKRGRGVIPMAAAIGLAGAIAFSQDIPDVLRPDLTIAYTDTDGYGQRGDRRPPGSEKYYPAIDAAIRRVTGKRRDRTVVLTADYSFLSYYPYWGFQGLTPHYANPLAQFDKRATQIDSWSGLSTADEFIAALDKLPWQPPTVFLMRHGAHNSYTLRLAQDVYPNQPNVRRYTVDLRTALFADPRFVVEDIGPFVLAIRKPQESA</sequence>
<feature type="chain" id="PRO_0000250356" description="Galactan 5-O-arabinofuranosyltransferase">
    <location>
        <begin position="1"/>
        <end position="643"/>
    </location>
</feature>
<feature type="transmembrane region" description="Helical" evidence="1">
    <location>
        <begin position="25"/>
        <end position="45"/>
    </location>
</feature>
<feature type="transmembrane region" description="Helical" evidence="1">
    <location>
        <begin position="66"/>
        <end position="86"/>
    </location>
</feature>
<feature type="transmembrane region" description="Helical" evidence="1">
    <location>
        <begin position="97"/>
        <end position="117"/>
    </location>
</feature>
<feature type="transmembrane region" description="Helical" evidence="1">
    <location>
        <begin position="180"/>
        <end position="200"/>
    </location>
</feature>
<feature type="transmembrane region" description="Helical" evidence="1">
    <location>
        <begin position="205"/>
        <end position="225"/>
    </location>
</feature>
<feature type="transmembrane region" description="Helical" evidence="1">
    <location>
        <begin position="229"/>
        <end position="249"/>
    </location>
</feature>
<feature type="transmembrane region" description="Helical" evidence="1">
    <location>
        <begin position="255"/>
        <end position="272"/>
    </location>
</feature>
<feature type="transmembrane region" description="Helical" evidence="1">
    <location>
        <begin position="276"/>
        <end position="293"/>
    </location>
</feature>
<feature type="transmembrane region" description="Helical" evidence="1">
    <location>
        <begin position="309"/>
        <end position="329"/>
    </location>
</feature>
<feature type="transmembrane region" description="Helical" evidence="1">
    <location>
        <begin position="355"/>
        <end position="375"/>
    </location>
</feature>
<feature type="transmembrane region" description="Helical" evidence="1">
    <location>
        <begin position="384"/>
        <end position="404"/>
    </location>
</feature>
<feature type="transmembrane region" description="Helical" evidence="1">
    <location>
        <begin position="420"/>
        <end position="440"/>
    </location>
</feature>
<feature type="transmembrane region" description="Helical" evidence="1">
    <location>
        <begin position="445"/>
        <end position="465"/>
    </location>
</feature>
<feature type="topological domain" description="Extracellular" evidence="1">
    <location>
        <begin position="466"/>
        <end position="643"/>
    </location>
</feature>
<feature type="helix" evidence="8">
    <location>
        <begin position="22"/>
        <end position="52"/>
    </location>
</feature>
<feature type="turn" evidence="8">
    <location>
        <begin position="58"/>
        <end position="60"/>
    </location>
</feature>
<feature type="helix" evidence="8">
    <location>
        <begin position="63"/>
        <end position="87"/>
    </location>
</feature>
<feature type="helix" evidence="8">
    <location>
        <begin position="92"/>
        <end position="112"/>
    </location>
</feature>
<feature type="turn" evidence="8">
    <location>
        <begin position="113"/>
        <end position="115"/>
    </location>
</feature>
<feature type="turn" evidence="8">
    <location>
        <begin position="122"/>
        <end position="125"/>
    </location>
</feature>
<feature type="helix" evidence="8">
    <location>
        <begin position="129"/>
        <end position="141"/>
    </location>
</feature>
<feature type="strand" evidence="8">
    <location>
        <begin position="148"/>
        <end position="152"/>
    </location>
</feature>
<feature type="helix" evidence="8">
    <location>
        <begin position="161"/>
        <end position="171"/>
    </location>
</feature>
<feature type="turn" evidence="8">
    <location>
        <begin position="176"/>
        <end position="178"/>
    </location>
</feature>
<feature type="helix" evidence="8">
    <location>
        <begin position="180"/>
        <end position="202"/>
    </location>
</feature>
<feature type="helix" evidence="8">
    <location>
        <begin position="205"/>
        <end position="223"/>
    </location>
</feature>
<feature type="turn" evidence="8">
    <location>
        <begin position="227"/>
        <end position="229"/>
    </location>
</feature>
<feature type="helix" evidence="8">
    <location>
        <begin position="230"/>
        <end position="233"/>
    </location>
</feature>
<feature type="helix" evidence="8">
    <location>
        <begin position="236"/>
        <end position="248"/>
    </location>
</feature>
<feature type="strand" evidence="8">
    <location>
        <begin position="251"/>
        <end position="254"/>
    </location>
</feature>
<feature type="helix" evidence="8">
    <location>
        <begin position="255"/>
        <end position="269"/>
    </location>
</feature>
<feature type="helix" evidence="8">
    <location>
        <begin position="273"/>
        <end position="293"/>
    </location>
</feature>
<feature type="helix" evidence="8">
    <location>
        <begin position="295"/>
        <end position="297"/>
    </location>
</feature>
<feature type="turn" evidence="8">
    <location>
        <begin position="299"/>
        <end position="302"/>
    </location>
</feature>
<feature type="helix" evidence="8">
    <location>
        <begin position="304"/>
        <end position="330"/>
    </location>
</feature>
<feature type="helix" evidence="8">
    <location>
        <begin position="348"/>
        <end position="350"/>
    </location>
</feature>
<feature type="strand" evidence="8">
    <location>
        <begin position="358"/>
        <end position="361"/>
    </location>
</feature>
<feature type="helix" evidence="8">
    <location>
        <begin position="362"/>
        <end position="377"/>
    </location>
</feature>
<feature type="turn" evidence="8">
    <location>
        <begin position="378"/>
        <end position="380"/>
    </location>
</feature>
<feature type="helix" evidence="8">
    <location>
        <begin position="382"/>
        <end position="404"/>
    </location>
</feature>
<feature type="helix" evidence="8">
    <location>
        <begin position="405"/>
        <end position="407"/>
    </location>
</feature>
<feature type="helix" evidence="8">
    <location>
        <begin position="417"/>
        <end position="441"/>
    </location>
</feature>
<feature type="helix" evidence="8">
    <location>
        <begin position="446"/>
        <end position="462"/>
    </location>
</feature>
<feature type="helix" evidence="8">
    <location>
        <begin position="465"/>
        <end position="468"/>
    </location>
</feature>
<feature type="helix" evidence="8">
    <location>
        <begin position="470"/>
        <end position="477"/>
    </location>
</feature>
<feature type="helix" evidence="8">
    <location>
        <begin position="498"/>
        <end position="509"/>
    </location>
</feature>
<feature type="helix" evidence="8">
    <location>
        <begin position="513"/>
        <end position="515"/>
    </location>
</feature>
<feature type="strand" evidence="8">
    <location>
        <begin position="517"/>
        <end position="521"/>
    </location>
</feature>
<feature type="turn" evidence="8">
    <location>
        <begin position="523"/>
        <end position="528"/>
    </location>
</feature>
<feature type="strand" evidence="8">
    <location>
        <begin position="532"/>
        <end position="535"/>
    </location>
</feature>
<feature type="turn" evidence="8">
    <location>
        <begin position="539"/>
        <end position="541"/>
    </location>
</feature>
<feature type="helix" evidence="8">
    <location>
        <begin position="544"/>
        <end position="546"/>
    </location>
</feature>
<feature type="helix" evidence="8">
    <location>
        <begin position="548"/>
        <end position="558"/>
    </location>
</feature>
<feature type="helix" evidence="8">
    <location>
        <begin position="564"/>
        <end position="571"/>
    </location>
</feature>
<feature type="strand" evidence="8">
    <location>
        <begin position="580"/>
        <end position="584"/>
    </location>
</feature>
<feature type="strand" evidence="8">
    <location>
        <begin position="602"/>
        <end position="605"/>
    </location>
</feature>
<feature type="helix" evidence="8">
    <location>
        <begin position="616"/>
        <end position="620"/>
    </location>
</feature>
<feature type="strand" evidence="8">
    <location>
        <begin position="621"/>
        <end position="631"/>
    </location>
</feature>
<feature type="strand" evidence="8">
    <location>
        <begin position="633"/>
        <end position="637"/>
    </location>
</feature>
<reference key="1">
    <citation type="journal article" date="1998" name="Nature">
        <title>Deciphering the biology of Mycobacterium tuberculosis from the complete genome sequence.</title>
        <authorList>
            <person name="Cole S.T."/>
            <person name="Brosch R."/>
            <person name="Parkhill J."/>
            <person name="Garnier T."/>
            <person name="Churcher C.M."/>
            <person name="Harris D.E."/>
            <person name="Gordon S.V."/>
            <person name="Eiglmeier K."/>
            <person name="Gas S."/>
            <person name="Barry C.E. III"/>
            <person name="Tekaia F."/>
            <person name="Badcock K."/>
            <person name="Basham D."/>
            <person name="Brown D."/>
            <person name="Chillingworth T."/>
            <person name="Connor R."/>
            <person name="Davies R.M."/>
            <person name="Devlin K."/>
            <person name="Feltwell T."/>
            <person name="Gentles S."/>
            <person name="Hamlin N."/>
            <person name="Holroyd S."/>
            <person name="Hornsby T."/>
            <person name="Jagels K."/>
            <person name="Krogh A."/>
            <person name="McLean J."/>
            <person name="Moule S."/>
            <person name="Murphy L.D."/>
            <person name="Oliver S."/>
            <person name="Osborne J."/>
            <person name="Quail M.A."/>
            <person name="Rajandream M.A."/>
            <person name="Rogers J."/>
            <person name="Rutter S."/>
            <person name="Seeger K."/>
            <person name="Skelton S."/>
            <person name="Squares S."/>
            <person name="Squares R."/>
            <person name="Sulston J.E."/>
            <person name="Taylor K."/>
            <person name="Whitehead S."/>
            <person name="Barrell B.G."/>
        </authorList>
    </citation>
    <scope>NUCLEOTIDE SEQUENCE [LARGE SCALE GENOMIC DNA]</scope>
    <source>
        <strain>ATCC 25618 / H37Rv</strain>
    </source>
</reference>
<reference key="2">
    <citation type="journal article" date="2006" name="J. Biol. Chem.">
        <title>Identification of a novel arabinofuranosyltransferase (AftA) involved in cell wall arabinan biosynthesis in Mycobacterium tuberculosis.</title>
        <authorList>
            <person name="Alderwick L.J."/>
            <person name="Seidel M."/>
            <person name="Sahm H."/>
            <person name="Besra G.S."/>
            <person name="Eggeling L."/>
        </authorList>
    </citation>
    <scope>FUNCTION AS AN ARABINOFURANOSYLTRANSFERASE</scope>
    <scope>CATALYTIC ACTIVITY</scope>
    <scope>ACTIVITY REGULATION</scope>
    <scope>SUBCELLULAR LOCATION</scope>
    <scope>PATHWAY</scope>
    <source>
        <strain>ATCC 25618 / H37Rv</strain>
    </source>
</reference>
<reference key="3">
    <citation type="journal article" date="2008" name="J. Bacteriol.">
        <title>Transfer of the first arabinofuranose residue to galactan is essential for Mycobacterium smegmatis viability.</title>
        <authorList>
            <person name="Shi L."/>
            <person name="Zhou R."/>
            <person name="Liu Z."/>
            <person name="Lowary T.L."/>
            <person name="Seeberger P.H."/>
            <person name="Stocker B.L."/>
            <person name="Crick D.C."/>
            <person name="Khoo K.H."/>
            <person name="Chatterjee D."/>
        </authorList>
    </citation>
    <scope>FUNCTION</scope>
    <scope>CATALYTIC ACTIVITY</scope>
    <source>
        <strain>H37Rv</strain>
    </source>
</reference>
<reference key="4">
    <citation type="journal article" date="2011" name="Mol. Cell. Proteomics">
        <title>Proteogenomic analysis of Mycobacterium tuberculosis by high resolution mass spectrometry.</title>
        <authorList>
            <person name="Kelkar D.S."/>
            <person name="Kumar D."/>
            <person name="Kumar P."/>
            <person name="Balakrishnan L."/>
            <person name="Muthusamy B."/>
            <person name="Yadav A.K."/>
            <person name="Shrivastava P."/>
            <person name="Marimuthu A."/>
            <person name="Anand S."/>
            <person name="Sundaram H."/>
            <person name="Kingsbury R."/>
            <person name="Harsha H.C."/>
            <person name="Nair B."/>
            <person name="Prasad T.S."/>
            <person name="Chauhan D.S."/>
            <person name="Katoch K."/>
            <person name="Katoch V.M."/>
            <person name="Kumar P."/>
            <person name="Chaerkady R."/>
            <person name="Ramachandran S."/>
            <person name="Dash D."/>
            <person name="Pandey A."/>
        </authorList>
    </citation>
    <scope>IDENTIFICATION BY MASS SPECTROMETRY [LARGE SCALE ANALYSIS]</scope>
    <source>
        <strain>ATCC 25618 / H37Rv</strain>
    </source>
</reference>
<reference key="5">
    <citation type="journal article" date="2015" name="J. Bacteriol.">
        <title>GtrA protein Rv3789 is required for arabinosylation of arabinogalactan in Mycobacterium tuberculosis.</title>
        <authorList>
            <person name="Kolly G.S."/>
            <person name="Mukherjee R."/>
            <person name="Kilacskova E."/>
            <person name="Abriata L.A."/>
            <person name="Raccaud M."/>
            <person name="Blasko J."/>
            <person name="Sala C."/>
            <person name="Dal Peraro M."/>
            <person name="Mikusova K."/>
            <person name="Cole S.T."/>
        </authorList>
    </citation>
    <scope>INTERACTION WITH RV3789</scope>
    <source>
        <strain>H37Rv</strain>
    </source>
</reference>
<accession>P9WN03</accession>
<accession>L0TGK7</accession>
<accession>P72058</accession>
<accession>Q8VIT6</accession>
<proteinExistence type="evidence at protein level"/>
<organism>
    <name type="scientific">Mycobacterium tuberculosis (strain ATCC 25618 / H37Rv)</name>
    <dbReference type="NCBI Taxonomy" id="83332"/>
    <lineage>
        <taxon>Bacteria</taxon>
        <taxon>Bacillati</taxon>
        <taxon>Actinomycetota</taxon>
        <taxon>Actinomycetes</taxon>
        <taxon>Mycobacteriales</taxon>
        <taxon>Mycobacteriaceae</taxon>
        <taxon>Mycobacterium</taxon>
        <taxon>Mycobacterium tuberculosis complex</taxon>
    </lineage>
</organism>
<evidence type="ECO:0000255" key="1"/>
<evidence type="ECO:0000269" key="2">
    <source>
    </source>
</evidence>
<evidence type="ECO:0000269" key="3">
    <source>
    </source>
</evidence>
<evidence type="ECO:0000303" key="4">
    <source>
    </source>
</evidence>
<evidence type="ECO:0000305" key="5"/>
<evidence type="ECO:0000305" key="6">
    <source>
    </source>
</evidence>
<evidence type="ECO:0000305" key="7">
    <source>
    </source>
</evidence>
<evidence type="ECO:0007829" key="8">
    <source>
        <dbReference type="PDB" id="8IF8"/>
    </source>
</evidence>